<feature type="chain" id="PRO_1000114035" description="Glutamate racemase">
    <location>
        <begin position="1"/>
        <end position="272"/>
    </location>
</feature>
<feature type="active site" description="Proton donor/acceptor" evidence="1">
    <location>
        <position position="79"/>
    </location>
</feature>
<feature type="active site" description="Proton donor/acceptor" evidence="1">
    <location>
        <position position="191"/>
    </location>
</feature>
<feature type="binding site" evidence="1">
    <location>
        <begin position="16"/>
        <end position="17"/>
    </location>
    <ligand>
        <name>substrate</name>
    </ligand>
</feature>
<feature type="binding site" evidence="1">
    <location>
        <begin position="48"/>
        <end position="49"/>
    </location>
    <ligand>
        <name>substrate</name>
    </ligand>
</feature>
<feature type="binding site" evidence="1">
    <location>
        <begin position="80"/>
        <end position="81"/>
    </location>
    <ligand>
        <name>substrate</name>
    </ligand>
</feature>
<feature type="binding site" evidence="1">
    <location>
        <begin position="192"/>
        <end position="193"/>
    </location>
    <ligand>
        <name>substrate</name>
    </ligand>
</feature>
<name>MURI_CHLP8</name>
<proteinExistence type="inferred from homology"/>
<accession>B3QQD9</accession>
<evidence type="ECO:0000255" key="1">
    <source>
        <dbReference type="HAMAP-Rule" id="MF_00258"/>
    </source>
</evidence>
<comment type="function">
    <text evidence="1">Provides the (R)-glutamate required for cell wall biosynthesis.</text>
</comment>
<comment type="catalytic activity">
    <reaction evidence="1">
        <text>L-glutamate = D-glutamate</text>
        <dbReference type="Rhea" id="RHEA:12813"/>
        <dbReference type="ChEBI" id="CHEBI:29985"/>
        <dbReference type="ChEBI" id="CHEBI:29986"/>
        <dbReference type="EC" id="5.1.1.3"/>
    </reaction>
</comment>
<comment type="pathway">
    <text evidence="1">Cell wall biogenesis; peptidoglycan biosynthesis.</text>
</comment>
<comment type="similarity">
    <text evidence="1">Belongs to the aspartate/glutamate racemases family.</text>
</comment>
<dbReference type="EC" id="5.1.1.3" evidence="1"/>
<dbReference type="EMBL" id="CP001099">
    <property type="protein sequence ID" value="ACF12142.1"/>
    <property type="molecule type" value="Genomic_DNA"/>
</dbReference>
<dbReference type="RefSeq" id="WP_012502975.1">
    <property type="nucleotide sequence ID" value="NC_011027.1"/>
</dbReference>
<dbReference type="SMR" id="B3QQD9"/>
<dbReference type="STRING" id="517417.Cpar_1750"/>
<dbReference type="KEGG" id="cpc:Cpar_1750"/>
<dbReference type="eggNOG" id="COG0796">
    <property type="taxonomic scope" value="Bacteria"/>
</dbReference>
<dbReference type="HOGENOM" id="CLU_052344_0_2_10"/>
<dbReference type="OrthoDB" id="9801055at2"/>
<dbReference type="UniPathway" id="UPA00219"/>
<dbReference type="Proteomes" id="UP000008811">
    <property type="component" value="Chromosome"/>
</dbReference>
<dbReference type="GO" id="GO:0008881">
    <property type="term" value="F:glutamate racemase activity"/>
    <property type="evidence" value="ECO:0007669"/>
    <property type="project" value="UniProtKB-UniRule"/>
</dbReference>
<dbReference type="GO" id="GO:0071555">
    <property type="term" value="P:cell wall organization"/>
    <property type="evidence" value="ECO:0007669"/>
    <property type="project" value="UniProtKB-KW"/>
</dbReference>
<dbReference type="GO" id="GO:0009252">
    <property type="term" value="P:peptidoglycan biosynthetic process"/>
    <property type="evidence" value="ECO:0007669"/>
    <property type="project" value="UniProtKB-UniRule"/>
</dbReference>
<dbReference type="GO" id="GO:0008360">
    <property type="term" value="P:regulation of cell shape"/>
    <property type="evidence" value="ECO:0007669"/>
    <property type="project" value="UniProtKB-KW"/>
</dbReference>
<dbReference type="FunFam" id="3.40.50.1860:FF:000001">
    <property type="entry name" value="Glutamate racemase"/>
    <property type="match status" value="1"/>
</dbReference>
<dbReference type="Gene3D" id="3.40.50.1860">
    <property type="match status" value="2"/>
</dbReference>
<dbReference type="HAMAP" id="MF_00258">
    <property type="entry name" value="Glu_racemase"/>
    <property type="match status" value="1"/>
</dbReference>
<dbReference type="InterPro" id="IPR015942">
    <property type="entry name" value="Asp/Glu/hydantoin_racemase"/>
</dbReference>
<dbReference type="InterPro" id="IPR001920">
    <property type="entry name" value="Asp/Glu_race"/>
</dbReference>
<dbReference type="InterPro" id="IPR033134">
    <property type="entry name" value="Asp/Glu_racemase_AS_2"/>
</dbReference>
<dbReference type="InterPro" id="IPR004391">
    <property type="entry name" value="Glu_race"/>
</dbReference>
<dbReference type="NCBIfam" id="TIGR00067">
    <property type="entry name" value="glut_race"/>
    <property type="match status" value="1"/>
</dbReference>
<dbReference type="PANTHER" id="PTHR21198">
    <property type="entry name" value="GLUTAMATE RACEMASE"/>
    <property type="match status" value="1"/>
</dbReference>
<dbReference type="PANTHER" id="PTHR21198:SF2">
    <property type="entry name" value="GLUTAMATE RACEMASE"/>
    <property type="match status" value="1"/>
</dbReference>
<dbReference type="Pfam" id="PF01177">
    <property type="entry name" value="Asp_Glu_race"/>
    <property type="match status" value="1"/>
</dbReference>
<dbReference type="SUPFAM" id="SSF53681">
    <property type="entry name" value="Aspartate/glutamate racemase"/>
    <property type="match status" value="2"/>
</dbReference>
<dbReference type="PROSITE" id="PS00924">
    <property type="entry name" value="ASP_GLU_RACEMASE_2"/>
    <property type="match status" value="1"/>
</dbReference>
<protein>
    <recommendedName>
        <fullName evidence="1">Glutamate racemase</fullName>
        <ecNumber evidence="1">5.1.1.3</ecNumber>
    </recommendedName>
</protein>
<reference key="1">
    <citation type="submission" date="2008-06" db="EMBL/GenBank/DDBJ databases">
        <title>Complete sequence of Chlorobaculum parvum NCIB 8327.</title>
        <authorList>
            <consortium name="US DOE Joint Genome Institute"/>
            <person name="Lucas S."/>
            <person name="Copeland A."/>
            <person name="Lapidus A."/>
            <person name="Glavina del Rio T."/>
            <person name="Dalin E."/>
            <person name="Tice H."/>
            <person name="Bruce D."/>
            <person name="Goodwin L."/>
            <person name="Pitluck S."/>
            <person name="Schmutz J."/>
            <person name="Larimer F."/>
            <person name="Land M."/>
            <person name="Hauser L."/>
            <person name="Kyrpides N."/>
            <person name="Mikhailova N."/>
            <person name="Zhao F."/>
            <person name="Li T."/>
            <person name="Liu Z."/>
            <person name="Overmann J."/>
            <person name="Bryant D.A."/>
            <person name="Richardson P."/>
        </authorList>
    </citation>
    <scope>NUCLEOTIDE SEQUENCE [LARGE SCALE GENOMIC DNA]</scope>
    <source>
        <strain>DSM 263 / NCIMB 8327</strain>
    </source>
</reference>
<sequence length="272" mass="29241">MSQHKLSSCSPIGIFDSGIGGLTVLKAVQAALPSERLLYFGDTARVPYGTKSQVTIRKYAREDTELLMKHQPKLIIVACNTVSALALDVVEQTAGDILVIGVLKAGAELAAHRTKSGRIGVIGTQATIGSNAYSCAIREENDALEVTPKACPLFVPLAEEGFIDHPATRLVAEEYLSAFTGKEIDTLVLGCTHYPILRKVIESIAGPQITIIDSAEAVASKAKELLSKHGLLNQSSATTLPHLMVSDLPQKFRELYRLFMGTELPDVELVGM</sequence>
<keyword id="KW-0133">Cell shape</keyword>
<keyword id="KW-0961">Cell wall biogenesis/degradation</keyword>
<keyword id="KW-0413">Isomerase</keyword>
<keyword id="KW-0573">Peptidoglycan synthesis</keyword>
<organism>
    <name type="scientific">Chlorobaculum parvum (strain DSM 263 / NCIMB 8327)</name>
    <name type="common">Chlorobium vibrioforme subsp. thiosulfatophilum</name>
    <dbReference type="NCBI Taxonomy" id="517417"/>
    <lineage>
        <taxon>Bacteria</taxon>
        <taxon>Pseudomonadati</taxon>
        <taxon>Chlorobiota</taxon>
        <taxon>Chlorobiia</taxon>
        <taxon>Chlorobiales</taxon>
        <taxon>Chlorobiaceae</taxon>
        <taxon>Chlorobaculum</taxon>
    </lineage>
</organism>
<gene>
    <name evidence="1" type="primary">murI</name>
    <name type="ordered locus">Cpar_1750</name>
</gene>